<dbReference type="EC" id="6.1.1.14" evidence="1"/>
<dbReference type="EMBL" id="CP001103">
    <property type="protein sequence ID" value="AEA96157.1"/>
    <property type="molecule type" value="Genomic_DNA"/>
</dbReference>
<dbReference type="RefSeq" id="WP_012516531.1">
    <property type="nucleotide sequence ID" value="NC_011138.3"/>
</dbReference>
<dbReference type="SMR" id="B4S278"/>
<dbReference type="GeneID" id="56340630"/>
<dbReference type="KEGG" id="amc:MADE_1000040"/>
<dbReference type="HOGENOM" id="CLU_057066_1_0_6"/>
<dbReference type="Proteomes" id="UP000001870">
    <property type="component" value="Chromosome"/>
</dbReference>
<dbReference type="GO" id="GO:0005829">
    <property type="term" value="C:cytosol"/>
    <property type="evidence" value="ECO:0007669"/>
    <property type="project" value="TreeGrafter"/>
</dbReference>
<dbReference type="GO" id="GO:0005524">
    <property type="term" value="F:ATP binding"/>
    <property type="evidence" value="ECO:0007669"/>
    <property type="project" value="UniProtKB-UniRule"/>
</dbReference>
<dbReference type="GO" id="GO:0004820">
    <property type="term" value="F:glycine-tRNA ligase activity"/>
    <property type="evidence" value="ECO:0007669"/>
    <property type="project" value="UniProtKB-UniRule"/>
</dbReference>
<dbReference type="GO" id="GO:0006426">
    <property type="term" value="P:glycyl-tRNA aminoacylation"/>
    <property type="evidence" value="ECO:0007669"/>
    <property type="project" value="UniProtKB-UniRule"/>
</dbReference>
<dbReference type="CDD" id="cd00733">
    <property type="entry name" value="GlyRS_alpha_core"/>
    <property type="match status" value="1"/>
</dbReference>
<dbReference type="FunFam" id="3.30.930.10:FF:000006">
    <property type="entry name" value="Glycine--tRNA ligase alpha subunit"/>
    <property type="match status" value="1"/>
</dbReference>
<dbReference type="Gene3D" id="3.30.930.10">
    <property type="entry name" value="Bira Bifunctional Protein, Domain 2"/>
    <property type="match status" value="1"/>
</dbReference>
<dbReference type="Gene3D" id="1.20.58.180">
    <property type="entry name" value="Class II aaRS and biotin synthetases, domain 2"/>
    <property type="match status" value="1"/>
</dbReference>
<dbReference type="HAMAP" id="MF_00254">
    <property type="entry name" value="Gly_tRNA_synth_alpha"/>
    <property type="match status" value="1"/>
</dbReference>
<dbReference type="InterPro" id="IPR045864">
    <property type="entry name" value="aa-tRNA-synth_II/BPL/LPL"/>
</dbReference>
<dbReference type="InterPro" id="IPR006194">
    <property type="entry name" value="Gly-tRNA-synth_heterodimer"/>
</dbReference>
<dbReference type="InterPro" id="IPR002310">
    <property type="entry name" value="Gly-tRNA_ligase_asu"/>
</dbReference>
<dbReference type="NCBIfam" id="TIGR00388">
    <property type="entry name" value="glyQ"/>
    <property type="match status" value="1"/>
</dbReference>
<dbReference type="NCBIfam" id="NF006827">
    <property type="entry name" value="PRK09348.1"/>
    <property type="match status" value="1"/>
</dbReference>
<dbReference type="PANTHER" id="PTHR30075:SF2">
    <property type="entry name" value="GLYCINE--TRNA LIGASE, CHLOROPLASTIC_MITOCHONDRIAL 2"/>
    <property type="match status" value="1"/>
</dbReference>
<dbReference type="PANTHER" id="PTHR30075">
    <property type="entry name" value="GLYCYL-TRNA SYNTHETASE"/>
    <property type="match status" value="1"/>
</dbReference>
<dbReference type="Pfam" id="PF02091">
    <property type="entry name" value="tRNA-synt_2e"/>
    <property type="match status" value="1"/>
</dbReference>
<dbReference type="PRINTS" id="PR01044">
    <property type="entry name" value="TRNASYNTHGA"/>
</dbReference>
<dbReference type="SUPFAM" id="SSF55681">
    <property type="entry name" value="Class II aaRS and biotin synthetases"/>
    <property type="match status" value="1"/>
</dbReference>
<dbReference type="PROSITE" id="PS50861">
    <property type="entry name" value="AA_TRNA_LIGASE_II_GLYAB"/>
    <property type="match status" value="1"/>
</dbReference>
<comment type="catalytic activity">
    <reaction evidence="1">
        <text>tRNA(Gly) + glycine + ATP = glycyl-tRNA(Gly) + AMP + diphosphate</text>
        <dbReference type="Rhea" id="RHEA:16013"/>
        <dbReference type="Rhea" id="RHEA-COMP:9664"/>
        <dbReference type="Rhea" id="RHEA-COMP:9683"/>
        <dbReference type="ChEBI" id="CHEBI:30616"/>
        <dbReference type="ChEBI" id="CHEBI:33019"/>
        <dbReference type="ChEBI" id="CHEBI:57305"/>
        <dbReference type="ChEBI" id="CHEBI:78442"/>
        <dbReference type="ChEBI" id="CHEBI:78522"/>
        <dbReference type="ChEBI" id="CHEBI:456215"/>
        <dbReference type="EC" id="6.1.1.14"/>
    </reaction>
</comment>
<comment type="subunit">
    <text evidence="1">Tetramer of two alpha and two beta subunits.</text>
</comment>
<comment type="subcellular location">
    <subcellularLocation>
        <location evidence="1">Cytoplasm</location>
    </subcellularLocation>
</comment>
<comment type="similarity">
    <text evidence="1">Belongs to the class-II aminoacyl-tRNA synthetase family.</text>
</comment>
<accession>B4S278</accession>
<accession>F2G1R0</accession>
<evidence type="ECO:0000255" key="1">
    <source>
        <dbReference type="HAMAP-Rule" id="MF_00254"/>
    </source>
</evidence>
<reference key="1">
    <citation type="journal article" date="2008" name="ISME J.">
        <title>Comparative genomics of two ecotypes of the marine planktonic copiotroph Alteromonas macleodii suggests alternative lifestyles associated with different kinds of particulate organic matter.</title>
        <authorList>
            <person name="Ivars-Martinez E."/>
            <person name="Martin-Cuadrado A.-B."/>
            <person name="D'Auria G."/>
            <person name="Mira A."/>
            <person name="Ferriera S."/>
            <person name="Johnson J."/>
            <person name="Friedman R."/>
            <person name="Rodriguez-Valera F."/>
        </authorList>
    </citation>
    <scope>NUCLEOTIDE SEQUENCE [LARGE SCALE GENOMIC DNA]</scope>
    <source>
        <strain>DSM 17117 / CIP 110805 / LMG 28347 / Deep ecotype</strain>
    </source>
</reference>
<feature type="chain" id="PRO_1000101174" description="Glycine--tRNA ligase alpha subunit">
    <location>
        <begin position="1"/>
        <end position="301"/>
    </location>
</feature>
<organism>
    <name type="scientific">Alteromonas mediterranea (strain DSM 17117 / CIP 110805 / LMG 28347 / Deep ecotype)</name>
    <dbReference type="NCBI Taxonomy" id="1774373"/>
    <lineage>
        <taxon>Bacteria</taxon>
        <taxon>Pseudomonadati</taxon>
        <taxon>Pseudomonadota</taxon>
        <taxon>Gammaproteobacteria</taxon>
        <taxon>Alteromonadales</taxon>
        <taxon>Alteromonadaceae</taxon>
        <taxon>Alteromonas/Salinimonas group</taxon>
        <taxon>Alteromonas</taxon>
    </lineage>
</organism>
<gene>
    <name evidence="1" type="primary">glyQ</name>
    <name type="ordered locus">MADE_1000040</name>
</gene>
<protein>
    <recommendedName>
        <fullName evidence="1">Glycine--tRNA ligase alpha subunit</fullName>
        <ecNumber evidence="1">6.1.1.14</ecNumber>
    </recommendedName>
    <alternativeName>
        <fullName evidence="1">Glycyl-tRNA synthetase alpha subunit</fullName>
        <shortName evidence="1">GlyRS</shortName>
    </alternativeName>
</protein>
<name>SYGA_ALTMD</name>
<proteinExistence type="inferred from homology"/>
<keyword id="KW-0030">Aminoacyl-tRNA synthetase</keyword>
<keyword id="KW-0067">ATP-binding</keyword>
<keyword id="KW-0963">Cytoplasm</keyword>
<keyword id="KW-0436">Ligase</keyword>
<keyword id="KW-0547">Nucleotide-binding</keyword>
<keyword id="KW-0648">Protein biosynthesis</keyword>
<sequence length="301" mass="34512">MQKYDIKTFQGLILALQDYWARQGCVIIQPLDMEVGAGTFHPMTFLRSLGPEPMSSAYVQPCRRPTDGRYGENPNRLQHYYQFQVMLKPSPDNIQELYLGSLKELGFDPLVHDIRFVEDNWESPTLGAWGLGWEVWLNGMEVTQFTYFQQVGGIECKPVTGEITYGLERLAMYVQGVDSIYDLVWTDGPMGKVTYGDVFHQNEVEQSTYNFEHANVEALFRTFDECEAESKKLIENSLPLPAYEQVMKASHAFNLLDARHAISVTERQRYILRVRTLAKACAESYYQAREALGFPLCNKEA</sequence>